<sequence>AVVNGVNYVGETTAA</sequence>
<name>ENPL4_LYSSX</name>
<organism>
    <name type="scientific">Lysobacter sp. (strain XL1)</name>
    <dbReference type="NCBI Taxonomy" id="186334"/>
    <lineage>
        <taxon>Bacteria</taxon>
        <taxon>Pseudomonadati</taxon>
        <taxon>Pseudomonadota</taxon>
        <taxon>Gammaproteobacteria</taxon>
        <taxon>Lysobacterales</taxon>
        <taxon>Lysobacteraceae</taxon>
        <taxon>Lysobacter</taxon>
    </lineage>
</organism>
<accession>P85155</accession>
<reference evidence="4" key="1">
    <citation type="submission" date="2007-05" db="UniProtKB">
        <title>Identification of extracellular bacteriolytic enzymes from Lysobacter sp. XL1.</title>
        <authorList>
            <person name="Muranova T.A."/>
            <person name="Stepnaya O.A."/>
            <person name="Tsfasman I.M."/>
            <person name="Kulaev I.S."/>
        </authorList>
    </citation>
    <scope>PROTEIN SEQUENCE</scope>
    <scope>SUBUNIT</scope>
    <scope>SUBCELLULAR LOCATION</scope>
</reference>
<reference evidence="4" key="2">
    <citation type="journal article" date="2005" name="Biochemistry (Mosc.)">
        <title>Isolation and characterization of a new extracellular bacteriolytic endopeptidase of Lysobacter sp. XL1.</title>
        <authorList>
            <person name="Stepnaya O.A."/>
            <person name="Tsfasman I.M."/>
            <person name="Logvina I.A."/>
            <person name="Ryazanova L.P."/>
            <person name="Muranova T.A."/>
            <person name="Kulaev I.S."/>
        </authorList>
    </citation>
    <scope>PROTEIN SEQUENCE OF 1-14</scope>
    <scope>FUNCTION</scope>
    <scope>ACTIVITY REGULATION</scope>
    <scope>BIOPHYSICOCHEMICAL PROPERTIES</scope>
</reference>
<evidence type="ECO:0000269" key="1">
    <source>
    </source>
</evidence>
<evidence type="ECO:0000269" key="2">
    <source ref="1"/>
</evidence>
<evidence type="ECO:0000303" key="3">
    <source ref="1"/>
</evidence>
<evidence type="ECO:0000305" key="4"/>
<comment type="function">
    <text evidence="1">Diaminopimelinoyl-alanine endopeptidase. Has antibacterial activity.</text>
</comment>
<comment type="activity regulation">
    <text evidence="1">Inhibited by PMSF and p-chloromercuribenzoate. Unaffected by EDTA.</text>
</comment>
<comment type="biophysicochemical properties">
    <phDependence>
        <text evidence="1">Optimum pH is 8.0.</text>
    </phDependence>
    <temperatureDependence>
        <text evidence="1">Optimum temperature is 50-55 degrees Celsius. Retains 50% of its maximal activity after incubation at 52 degrees Celsius for 15 minutes.</text>
    </temperatureDependence>
</comment>
<comment type="subunit">
    <text evidence="2">Monomer.</text>
</comment>
<comment type="subcellular location">
    <subcellularLocation>
        <location evidence="2">Secreted</location>
    </subcellularLocation>
</comment>
<keyword id="KW-0044">Antibiotic</keyword>
<keyword id="KW-0929">Antimicrobial</keyword>
<keyword id="KW-0903">Direct protein sequencing</keyword>
<keyword id="KW-0378">Hydrolase</keyword>
<keyword id="KW-0645">Protease</keyword>
<keyword id="KW-0964">Secreted</keyword>
<keyword id="KW-0720">Serine protease</keyword>
<protein>
    <recommendedName>
        <fullName>Endopeptidase L4</fullName>
        <ecNumber>3.4.21.-</ecNumber>
    </recommendedName>
</protein>
<feature type="chain" id="PRO_0000292608" description="Endopeptidase L4">
    <location>
        <begin position="1"/>
        <end position="15" status="greater than"/>
    </location>
</feature>
<feature type="non-terminal residue" evidence="3">
    <location>
        <position position="15"/>
    </location>
</feature>
<dbReference type="EC" id="3.4.21.-"/>
<dbReference type="GO" id="GO:0005576">
    <property type="term" value="C:extracellular region"/>
    <property type="evidence" value="ECO:0007669"/>
    <property type="project" value="UniProtKB-SubCell"/>
</dbReference>
<dbReference type="GO" id="GO:0008236">
    <property type="term" value="F:serine-type peptidase activity"/>
    <property type="evidence" value="ECO:0007669"/>
    <property type="project" value="UniProtKB-KW"/>
</dbReference>
<dbReference type="GO" id="GO:0042742">
    <property type="term" value="P:defense response to bacterium"/>
    <property type="evidence" value="ECO:0007669"/>
    <property type="project" value="UniProtKB-KW"/>
</dbReference>
<dbReference type="GO" id="GO:0006508">
    <property type="term" value="P:proteolysis"/>
    <property type="evidence" value="ECO:0007669"/>
    <property type="project" value="UniProtKB-KW"/>
</dbReference>
<proteinExistence type="evidence at protein level"/>